<accession>Q2QLA2</accession>
<name>CTTB2_HORSE</name>
<evidence type="ECO:0000250" key="1">
    <source>
        <dbReference type="UniProtKB" id="B9EJA2"/>
    </source>
</evidence>
<evidence type="ECO:0000250" key="2">
    <source>
        <dbReference type="UniProtKB" id="Q2IBD4"/>
    </source>
</evidence>
<evidence type="ECO:0000250" key="3">
    <source>
        <dbReference type="UniProtKB" id="Q8WZ74"/>
    </source>
</evidence>
<evidence type="ECO:0000255" key="4"/>
<evidence type="ECO:0000256" key="5">
    <source>
        <dbReference type="SAM" id="MobiDB-lite"/>
    </source>
</evidence>
<proteinExistence type="inferred from homology"/>
<dbReference type="EMBL" id="DP000020">
    <property type="protein sequence ID" value="ABB89807.1"/>
    <property type="molecule type" value="Genomic_DNA"/>
</dbReference>
<dbReference type="RefSeq" id="NP_001107617.1">
    <property type="nucleotide sequence ID" value="NM_001114145.1"/>
</dbReference>
<dbReference type="SMR" id="Q2QLA2"/>
<dbReference type="FunCoup" id="Q2QLA2">
    <property type="interactions" value="1096"/>
</dbReference>
<dbReference type="STRING" id="9796.ENSECAP00000022668"/>
<dbReference type="PaxDb" id="9796-ENSECAP00000022668"/>
<dbReference type="GeneID" id="100071265"/>
<dbReference type="KEGG" id="ecb:100071265"/>
<dbReference type="CTD" id="83992"/>
<dbReference type="InParanoid" id="Q2QLA2"/>
<dbReference type="OrthoDB" id="6021133at2759"/>
<dbReference type="Proteomes" id="UP000002281">
    <property type="component" value="Unplaced"/>
</dbReference>
<dbReference type="GO" id="GO:0005938">
    <property type="term" value="C:cell cortex"/>
    <property type="evidence" value="ECO:0007669"/>
    <property type="project" value="UniProtKB-SubCell"/>
</dbReference>
<dbReference type="GO" id="GO:0043197">
    <property type="term" value="C:dendritic spine"/>
    <property type="evidence" value="ECO:0000250"/>
    <property type="project" value="UniProtKB"/>
</dbReference>
<dbReference type="GO" id="GO:0090443">
    <property type="term" value="C:FAR/SIN/STRIPAK complex"/>
    <property type="evidence" value="ECO:0000250"/>
    <property type="project" value="UniProtKB"/>
</dbReference>
<dbReference type="GO" id="GO:0098978">
    <property type="term" value="C:glutamatergic synapse"/>
    <property type="evidence" value="ECO:0000318"/>
    <property type="project" value="GO_Central"/>
</dbReference>
<dbReference type="GO" id="GO:0050807">
    <property type="term" value="P:regulation of synapse organization"/>
    <property type="evidence" value="ECO:0000318"/>
    <property type="project" value="GO_Central"/>
</dbReference>
<dbReference type="Gene3D" id="1.25.40.20">
    <property type="entry name" value="Ankyrin repeat-containing domain"/>
    <property type="match status" value="1"/>
</dbReference>
<dbReference type="InterPro" id="IPR002110">
    <property type="entry name" value="Ankyrin_rpt"/>
</dbReference>
<dbReference type="InterPro" id="IPR036770">
    <property type="entry name" value="Ankyrin_rpt-contain_sf"/>
</dbReference>
<dbReference type="InterPro" id="IPR050719">
    <property type="entry name" value="Cortactin-Actin_Reg"/>
</dbReference>
<dbReference type="InterPro" id="IPR019131">
    <property type="entry name" value="Cortactin-binding_p2_N"/>
</dbReference>
<dbReference type="PANTHER" id="PTHR23166:SF9">
    <property type="entry name" value="CTTNBP2 N-TERMINAL-LIKE PROTEIN"/>
    <property type="match status" value="1"/>
</dbReference>
<dbReference type="PANTHER" id="PTHR23166">
    <property type="entry name" value="FILAMIN/GPBP-INTERACTING PROTEIN"/>
    <property type="match status" value="1"/>
</dbReference>
<dbReference type="Pfam" id="PF25408">
    <property type="entry name" value="AAA_lid_NAV1"/>
    <property type="match status" value="1"/>
</dbReference>
<dbReference type="Pfam" id="PF12796">
    <property type="entry name" value="Ank_2"/>
    <property type="match status" value="2"/>
</dbReference>
<dbReference type="Pfam" id="PF09727">
    <property type="entry name" value="CortBP2"/>
    <property type="match status" value="1"/>
</dbReference>
<dbReference type="SMART" id="SM00248">
    <property type="entry name" value="ANK"/>
    <property type="match status" value="6"/>
</dbReference>
<dbReference type="SUPFAM" id="SSF48403">
    <property type="entry name" value="Ankyrin repeat"/>
    <property type="match status" value="1"/>
</dbReference>
<dbReference type="PROSITE" id="PS50297">
    <property type="entry name" value="ANK_REP_REGION"/>
    <property type="match status" value="1"/>
</dbReference>
<dbReference type="PROSITE" id="PS50088">
    <property type="entry name" value="ANK_REPEAT"/>
    <property type="match status" value="4"/>
</dbReference>
<comment type="function">
    <text evidence="2">Regulates the dendritic spine distribution of CTTN/cortactin in hippocampal neurons, and thus controls dendritic spinogenesis and dendritic spine maintenance. Associates with the striatin-interacting phosphatase and kinase (STRIPAK) core complex to regulate dendritic spine distribution of the STRIPAK complex in hippocampal neurons.</text>
</comment>
<comment type="subunit">
    <text evidence="2">Interacts with CTTN/cortactin SH3 domain. Interacts with STRN, STRN4/zinedin and MOB4/phocein; this interactions mediate the association with the STRIPAK core complex and may regulate dendritic spine distribution of the STRIPAK complex in hippocampal neurons. Activation of glutamate receptors weakens the interaction with STRN and STRN4.</text>
</comment>
<comment type="subcellular location">
    <subcellularLocation>
        <location evidence="1">Cytoplasm</location>
        <location evidence="1">Cell cortex</location>
    </subcellularLocation>
    <subcellularLocation>
        <location evidence="2">Cell projection</location>
        <location evidence="2">Dendritic spine</location>
    </subcellularLocation>
    <text evidence="2">Remains associated with dendritic spines even after glutamate stimulation.</text>
</comment>
<feature type="chain" id="PRO_0000227001" description="Cortactin-binding protein 2">
    <location>
        <begin position="1"/>
        <end position="1665"/>
    </location>
</feature>
<feature type="repeat" description="ANK 1">
    <location>
        <begin position="710"/>
        <end position="740"/>
    </location>
</feature>
<feature type="repeat" description="ANK 2">
    <location>
        <begin position="744"/>
        <end position="773"/>
    </location>
</feature>
<feature type="repeat" description="ANK 3">
    <location>
        <begin position="777"/>
        <end position="806"/>
    </location>
</feature>
<feature type="repeat" description="ANK 4">
    <location>
        <begin position="810"/>
        <end position="839"/>
    </location>
</feature>
<feature type="repeat" description="ANK 5">
    <location>
        <begin position="843"/>
        <end position="872"/>
    </location>
</feature>
<feature type="repeat" description="ANK 6">
    <location>
        <begin position="914"/>
        <end position="944"/>
    </location>
</feature>
<feature type="region of interest" description="Disordered" evidence="5">
    <location>
        <begin position="1"/>
        <end position="23"/>
    </location>
</feature>
<feature type="region of interest" description="Disordered" evidence="5">
    <location>
        <begin position="201"/>
        <end position="235"/>
    </location>
</feature>
<feature type="region of interest" description="Disordered" evidence="5">
    <location>
        <begin position="360"/>
        <end position="441"/>
    </location>
</feature>
<feature type="region of interest" description="Disordered" evidence="5">
    <location>
        <begin position="455"/>
        <end position="480"/>
    </location>
</feature>
<feature type="region of interest" description="Disordered" evidence="5">
    <location>
        <begin position="499"/>
        <end position="617"/>
    </location>
</feature>
<feature type="region of interest" description="Disordered" evidence="5">
    <location>
        <begin position="1447"/>
        <end position="1484"/>
    </location>
</feature>
<feature type="region of interest" description="Disordered" evidence="5">
    <location>
        <begin position="1544"/>
        <end position="1648"/>
    </location>
</feature>
<feature type="coiled-coil region" evidence="4">
    <location>
        <begin position="120"/>
        <end position="276"/>
    </location>
</feature>
<feature type="compositionally biased region" description="Polar residues" evidence="5">
    <location>
        <begin position="385"/>
        <end position="395"/>
    </location>
</feature>
<feature type="compositionally biased region" description="Polar residues" evidence="5">
    <location>
        <begin position="584"/>
        <end position="594"/>
    </location>
</feature>
<feature type="compositionally biased region" description="Basic and acidic residues" evidence="5">
    <location>
        <begin position="1544"/>
        <end position="1562"/>
    </location>
</feature>
<feature type="compositionally biased region" description="Polar residues" evidence="5">
    <location>
        <begin position="1564"/>
        <end position="1576"/>
    </location>
</feature>
<feature type="compositionally biased region" description="Polar residues" evidence="5">
    <location>
        <begin position="1584"/>
        <end position="1604"/>
    </location>
</feature>
<feature type="compositionally biased region" description="Low complexity" evidence="5">
    <location>
        <begin position="1626"/>
        <end position="1640"/>
    </location>
</feature>
<feature type="modified residue" description="Asymmetric dimethylarginine" evidence="1">
    <location>
        <position position="499"/>
    </location>
</feature>
<feature type="modified residue" description="Phosphoserine" evidence="3">
    <location>
        <position position="1526"/>
    </location>
</feature>
<protein>
    <recommendedName>
        <fullName>Cortactin-binding protein 2</fullName>
        <shortName>CortBP2</shortName>
    </recommendedName>
</protein>
<gene>
    <name type="primary">CTTNBP2</name>
    <name type="synonym">CORTBP2</name>
</gene>
<reference key="1">
    <citation type="submission" date="2005-11" db="EMBL/GenBank/DDBJ databases">
        <title>NISC comparative sequencing initiative.</title>
        <authorList>
            <person name="Antonellis A."/>
            <person name="Ayele K."/>
            <person name="Benjamin B."/>
            <person name="Blakesley R.W."/>
            <person name="Boakye A."/>
            <person name="Bouffard G.G."/>
            <person name="Brinkley C."/>
            <person name="Brooks S."/>
            <person name="Chu G."/>
            <person name="Coleman H."/>
            <person name="Engle J."/>
            <person name="Gestole M."/>
            <person name="Greene A."/>
            <person name="Guan X."/>
            <person name="Gupta J."/>
            <person name="Haghighi P."/>
            <person name="Han J."/>
            <person name="Hansen N."/>
            <person name="Ho S.-L."/>
            <person name="Hu P."/>
            <person name="Hunter G."/>
            <person name="Hurle B."/>
            <person name="Idol J.R."/>
            <person name="Kwong P."/>
            <person name="Laric P."/>
            <person name="Larson S."/>
            <person name="Lee-Lin S.-Q."/>
            <person name="Legaspi R."/>
            <person name="Madden M."/>
            <person name="Maduro Q.L."/>
            <person name="Maduro V.B."/>
            <person name="Margulies E.H."/>
            <person name="Masiello C."/>
            <person name="Maskeri B."/>
            <person name="McDowell J."/>
            <person name="Mojidi H.A."/>
            <person name="Mullikin J.C."/>
            <person name="Oestreicher J.S."/>
            <person name="Park M."/>
            <person name="Portnoy M.E."/>
            <person name="Prasad A."/>
            <person name="Puri O."/>
            <person name="Reddix-Dugue N."/>
            <person name="Schandler K."/>
            <person name="Schueler M.G."/>
            <person name="Sison C."/>
            <person name="Stantripop S."/>
            <person name="Stephen E."/>
            <person name="Taye A."/>
            <person name="Thomas J.W."/>
            <person name="Thomas P.J."/>
            <person name="Tsipouri V."/>
            <person name="Ung L."/>
            <person name="Vogt J.L."/>
            <person name="Wetherby K.D."/>
            <person name="Young A."/>
            <person name="Green E.D."/>
        </authorList>
    </citation>
    <scope>NUCLEOTIDE SEQUENCE [LARGE SCALE GENOMIC DNA]</scope>
</reference>
<keyword id="KW-0040">ANK repeat</keyword>
<keyword id="KW-0966">Cell projection</keyword>
<keyword id="KW-0175">Coiled coil</keyword>
<keyword id="KW-0963">Cytoplasm</keyword>
<keyword id="KW-0488">Methylation</keyword>
<keyword id="KW-0597">Phosphoprotein</keyword>
<keyword id="KW-1185">Reference proteome</keyword>
<keyword id="KW-0677">Repeat</keyword>
<keyword id="KW-0770">Synapse</keyword>
<organism>
    <name type="scientific">Equus caballus</name>
    <name type="common">Horse</name>
    <dbReference type="NCBI Taxonomy" id="9796"/>
    <lineage>
        <taxon>Eukaryota</taxon>
        <taxon>Metazoa</taxon>
        <taxon>Chordata</taxon>
        <taxon>Craniata</taxon>
        <taxon>Vertebrata</taxon>
        <taxon>Euteleostomi</taxon>
        <taxon>Mammalia</taxon>
        <taxon>Eutheria</taxon>
        <taxon>Laurasiatheria</taxon>
        <taxon>Perissodactyla</taxon>
        <taxon>Equidae</taxon>
        <taxon>Equus</taxon>
    </lineage>
</organism>
<sequence length="1665" mass="181385">MATDGASCEPDFSRSPEDAAGATAEAAKKEFDVDTLSKSELLMLLSVMEGELEARDLVIEALRARRKEVFIQERYGRFNLNDPFLALQRDYEAGAGDKEKKPVCTNPLSILEAVMAHCRKMQERMSTQLAAAESRQKKLEMEKLQLQALEQEHKKLASRLEEERGKNKHVVLMLVKECKQLSSKVIEEAQKLEEVMAKLEEEKKKTSALEEELSAEKRRSTEMEAQMEKQLSEFDTEREQLRAKLHREEAHTTDLKEEIDKMKKMIEQLKRGNDNKPSLSLPRKTKDRRLVSISVGTEGPMTRSVACQTDPVIESSDHVKKLPLTMPVKPSTGSPLVSANAKGNVCTNAALVRPGIDRQASHGDLIGSSLPTVPPPSANRIEENGPSTGSTADLTSSTPPLPNNAAPPTVQTPGVAPQSYSQASPMHSLHSPCANASLHPGLNPRIQAARFRFQGNANDPDQNGNTTQSPPSRDVSPTSRENLVAKQLARNTVTQALSRFTSPQAGAPPRPGVSPTGDVGTYPPVGRTSLKTPGVARVDRGNPPPIPPKKPGLSQTPSPPHPQLKVIMDSSRASNAGAKVDNKTVASPPSSLPQGNRVINEENLPKSSSPQLPPKPSIDLTVAPAGCAVSALATSQVGAWPAETPGLNQPACSESSLVIPTTIAFSSSINPVSASSCRAGASDSLLVTASGWSPSLTPLLMSGGPAPLAGRPTLLQQAAAQGNVTLLSMLLNEEGLDINYSCEDGHSALYSAAKNGHTDCVRLLLNAEAQVDAADKNGFTPLCAAAAQGHFKCVQLLIAYDANINHAADGGQTPLYLACKNGNKECIKLLLEAGSDRSIKTRDGWTPVHAAVDTGNVDSLKLLMYHRAPAHGSSLHKEEPESSIFDLDRQGEESPEGTFKPVVPADLINQADREGWTAAHIAASKGFKNCLEILCRHGGLEPERRDKCSRTAHDVATDDCKHLLENLNALKIPLRISVGEIQPGNYGSDDFECENTICALNIRKQTSWDDFSKAVTQALTNHFQAISSDGWWSLEDMKFNNTTDSSIGLGASSVRSITLGNVPWSAGQSFTQSPWDFMRKNKAEQITVLLSGPQEGCLSSVTYTSMIPLQMLQNYLRLVEQYHNVIFHGPEGSLQDYIAHQLALCMKHRQMAAGFSCEIVRAEVDAGFSKEQLVDLFISSACLIPVKQSPVKKKIIIILENLERSSLSELLGDFLAPLENRCPESPCTFQKGNGTAECYYFHENCFLMGTIAKACLQGSDLLVQQHFRWVQLRWDGEPMQGLLQRFLRRKVVNKFRGQVPSPCDPVCKTVDWALAVWRQLNSCLARLGTPEALLGPKYFLSCPVIPGHAQATVKWMSKLWNAVIAPRVQDAILSRASVKRQPGLGQTIAKKHPSQGQQAVVKAALSILLNKAVLHGCPLPRAELDQHTADFKGGSFPLSLVSSYNSCSKKKGESGAWRKVSTSPRKKSSRFSSPTWNKPDLSEEGIKNKTISQLNCNRNASLSKQKSFENDLSLTLSLDQRFSLGSDDEADLVKELQSMCSSKSESDISKIADSRDDLRRFDSPGNNPAFSATVNNPRMPVSQKEVSPLSSHQTTECSNSQSKTELGVSRVKSFLPVPRSKVTPCSQNTKRSSSSSNTRQIEINNNSKEEIWNLRKNEQVEKPNK</sequence>